<keyword id="KW-0030">Aminoacyl-tRNA synthetase</keyword>
<keyword id="KW-0067">ATP-binding</keyword>
<keyword id="KW-0175">Coiled coil</keyword>
<keyword id="KW-0963">Cytoplasm</keyword>
<keyword id="KW-0436">Ligase</keyword>
<keyword id="KW-0547">Nucleotide-binding</keyword>
<keyword id="KW-0648">Protein biosynthesis</keyword>
<keyword id="KW-1185">Reference proteome</keyword>
<proteinExistence type="inferred from homology"/>
<accession>Q67SJ2</accession>
<name>SYV_SYMTH</name>
<gene>
    <name evidence="1" type="primary">valS</name>
    <name type="ordered locus">STH366</name>
</gene>
<protein>
    <recommendedName>
        <fullName evidence="1">Valine--tRNA ligase</fullName>
        <ecNumber evidence="1">6.1.1.9</ecNumber>
    </recommendedName>
    <alternativeName>
        <fullName evidence="1">Valyl-tRNA synthetase</fullName>
        <shortName evidence="1">ValRS</shortName>
    </alternativeName>
</protein>
<dbReference type="EC" id="6.1.1.9" evidence="1"/>
<dbReference type="EMBL" id="AP006840">
    <property type="protein sequence ID" value="BAD39351.1"/>
    <property type="molecule type" value="Genomic_DNA"/>
</dbReference>
<dbReference type="RefSeq" id="WP_011194500.1">
    <property type="nucleotide sequence ID" value="NC_006177.1"/>
</dbReference>
<dbReference type="SMR" id="Q67SJ2"/>
<dbReference type="STRING" id="292459.STH366"/>
<dbReference type="KEGG" id="sth:STH366"/>
<dbReference type="eggNOG" id="COG0525">
    <property type="taxonomic scope" value="Bacteria"/>
</dbReference>
<dbReference type="HOGENOM" id="CLU_001493_0_2_9"/>
<dbReference type="OrthoDB" id="9810365at2"/>
<dbReference type="Proteomes" id="UP000000417">
    <property type="component" value="Chromosome"/>
</dbReference>
<dbReference type="GO" id="GO:0005829">
    <property type="term" value="C:cytosol"/>
    <property type="evidence" value="ECO:0007669"/>
    <property type="project" value="TreeGrafter"/>
</dbReference>
<dbReference type="GO" id="GO:0002161">
    <property type="term" value="F:aminoacyl-tRNA deacylase activity"/>
    <property type="evidence" value="ECO:0007669"/>
    <property type="project" value="InterPro"/>
</dbReference>
<dbReference type="GO" id="GO:0005524">
    <property type="term" value="F:ATP binding"/>
    <property type="evidence" value="ECO:0007669"/>
    <property type="project" value="UniProtKB-UniRule"/>
</dbReference>
<dbReference type="GO" id="GO:0004832">
    <property type="term" value="F:valine-tRNA ligase activity"/>
    <property type="evidence" value="ECO:0007669"/>
    <property type="project" value="UniProtKB-UniRule"/>
</dbReference>
<dbReference type="GO" id="GO:0006438">
    <property type="term" value="P:valyl-tRNA aminoacylation"/>
    <property type="evidence" value="ECO:0007669"/>
    <property type="project" value="UniProtKB-UniRule"/>
</dbReference>
<dbReference type="CDD" id="cd07962">
    <property type="entry name" value="Anticodon_Ia_Val"/>
    <property type="match status" value="1"/>
</dbReference>
<dbReference type="CDD" id="cd00817">
    <property type="entry name" value="ValRS_core"/>
    <property type="match status" value="1"/>
</dbReference>
<dbReference type="FunFam" id="1.10.287.380:FF:000001">
    <property type="entry name" value="Valine--tRNA ligase"/>
    <property type="match status" value="1"/>
</dbReference>
<dbReference type="FunFam" id="1.10.730.10:FF:000014">
    <property type="entry name" value="Valine--tRNA ligase"/>
    <property type="match status" value="1"/>
</dbReference>
<dbReference type="FunFam" id="3.40.50.620:FF:000032">
    <property type="entry name" value="Valine--tRNA ligase"/>
    <property type="match status" value="1"/>
</dbReference>
<dbReference type="FunFam" id="3.40.50.620:FF:000098">
    <property type="entry name" value="Valine--tRNA ligase"/>
    <property type="match status" value="1"/>
</dbReference>
<dbReference type="FunFam" id="3.90.740.10:FF:000005">
    <property type="entry name" value="Valine--tRNA ligase, mitochondrial"/>
    <property type="match status" value="1"/>
</dbReference>
<dbReference type="Gene3D" id="3.40.50.620">
    <property type="entry name" value="HUPs"/>
    <property type="match status" value="2"/>
</dbReference>
<dbReference type="Gene3D" id="1.10.730.10">
    <property type="entry name" value="Isoleucyl-tRNA Synthetase, Domain 1"/>
    <property type="match status" value="1"/>
</dbReference>
<dbReference type="Gene3D" id="1.10.287.380">
    <property type="entry name" value="Valyl-tRNA synthetase, C-terminal domain"/>
    <property type="match status" value="1"/>
</dbReference>
<dbReference type="Gene3D" id="3.90.740.10">
    <property type="entry name" value="Valyl/Leucyl/Isoleucyl-tRNA synthetase, editing domain"/>
    <property type="match status" value="2"/>
</dbReference>
<dbReference type="HAMAP" id="MF_02004">
    <property type="entry name" value="Val_tRNA_synth_type1"/>
    <property type="match status" value="1"/>
</dbReference>
<dbReference type="InterPro" id="IPR001412">
    <property type="entry name" value="aa-tRNA-synth_I_CS"/>
</dbReference>
<dbReference type="InterPro" id="IPR002300">
    <property type="entry name" value="aa-tRNA-synth_Ia"/>
</dbReference>
<dbReference type="InterPro" id="IPR033705">
    <property type="entry name" value="Anticodon_Ia_Val"/>
</dbReference>
<dbReference type="InterPro" id="IPR013155">
    <property type="entry name" value="M/V/L/I-tRNA-synth_anticd-bd"/>
</dbReference>
<dbReference type="InterPro" id="IPR014729">
    <property type="entry name" value="Rossmann-like_a/b/a_fold"/>
</dbReference>
<dbReference type="InterPro" id="IPR010978">
    <property type="entry name" value="tRNA-bd_arm"/>
</dbReference>
<dbReference type="InterPro" id="IPR009080">
    <property type="entry name" value="tRNAsynth_Ia_anticodon-bd"/>
</dbReference>
<dbReference type="InterPro" id="IPR037118">
    <property type="entry name" value="Val-tRNA_synth_C_sf"/>
</dbReference>
<dbReference type="InterPro" id="IPR019499">
    <property type="entry name" value="Val-tRNA_synth_tRNA-bd"/>
</dbReference>
<dbReference type="InterPro" id="IPR009008">
    <property type="entry name" value="Val/Leu/Ile-tRNA-synth_edit"/>
</dbReference>
<dbReference type="InterPro" id="IPR002303">
    <property type="entry name" value="Valyl-tRNA_ligase"/>
</dbReference>
<dbReference type="NCBIfam" id="NF004349">
    <property type="entry name" value="PRK05729.1"/>
    <property type="match status" value="1"/>
</dbReference>
<dbReference type="NCBIfam" id="TIGR00422">
    <property type="entry name" value="valS"/>
    <property type="match status" value="1"/>
</dbReference>
<dbReference type="PANTHER" id="PTHR11946:SF93">
    <property type="entry name" value="VALINE--TRNA LIGASE, CHLOROPLASTIC_MITOCHONDRIAL 2"/>
    <property type="match status" value="1"/>
</dbReference>
<dbReference type="PANTHER" id="PTHR11946">
    <property type="entry name" value="VALYL-TRNA SYNTHETASES"/>
    <property type="match status" value="1"/>
</dbReference>
<dbReference type="Pfam" id="PF08264">
    <property type="entry name" value="Anticodon_1"/>
    <property type="match status" value="1"/>
</dbReference>
<dbReference type="Pfam" id="PF00133">
    <property type="entry name" value="tRNA-synt_1"/>
    <property type="match status" value="1"/>
</dbReference>
<dbReference type="Pfam" id="PF10458">
    <property type="entry name" value="Val_tRNA-synt_C"/>
    <property type="match status" value="1"/>
</dbReference>
<dbReference type="PRINTS" id="PR00986">
    <property type="entry name" value="TRNASYNTHVAL"/>
</dbReference>
<dbReference type="SUPFAM" id="SSF47323">
    <property type="entry name" value="Anticodon-binding domain of a subclass of class I aminoacyl-tRNA synthetases"/>
    <property type="match status" value="1"/>
</dbReference>
<dbReference type="SUPFAM" id="SSF52374">
    <property type="entry name" value="Nucleotidylyl transferase"/>
    <property type="match status" value="1"/>
</dbReference>
<dbReference type="SUPFAM" id="SSF46589">
    <property type="entry name" value="tRNA-binding arm"/>
    <property type="match status" value="1"/>
</dbReference>
<dbReference type="SUPFAM" id="SSF50677">
    <property type="entry name" value="ValRS/IleRS/LeuRS editing domain"/>
    <property type="match status" value="1"/>
</dbReference>
<dbReference type="PROSITE" id="PS00178">
    <property type="entry name" value="AA_TRNA_LIGASE_I"/>
    <property type="match status" value="1"/>
</dbReference>
<sequence length="911" mass="103067">MSAEQKQGGTELAPRYDAKLVEDEYYQYWMDGGFYRAPIVEGKQPYTIVIPPPNVTGTLHLGHALNNTMIDILIRWKRMQGHPTLYLPGTDHAGLATQIRVEEDLRKSGGPTRHELGREAFVAKVWDWKERYHATITSQLRKLGVSVDWSREAFTMDERLSRAVRAFFVQLYKKGLIYQGTRITHWCPKDQTALSDIEVEYEERQGHMWHFRYPLADGSGSIVIATTRPETMLGDTAVAVNPEDERYKHLVGKMLRHPATGREIPIIADEYVDPAFGTGCVKITPFHDPNDFEIGLRHGLEMPQVIGPKGEMTEAAGKYAGLDRYECRRRIVADAEAEGWLVKVEEHQHAVGCCARCGTVIEPLISRQWYVKMKPLAEPAIRAVESGQIKIVPERFTKVYLHWMENIQDWCISRQIWWGHRIPVWYCDDCGHLTVSETDPTRCEKCGSANIRQDEDALDTWFSSALWPFSTLGWPDDTADLRYFFPTDVLVTGYDILFFWVARMIFSSLELTGKIPFHTVVLHGLVRDAQGRKMSKSLGNGVDPIDVIDQYGTDALRFMLVTGSSPGNDIRFHTERVENARNFANKLWNASRFVLMNLADWQPAAEGAALQYDVADRWIRHRFNEAARAVNELLGEYQYGEAARTIYDFIWSEFCDWYIELVKPRLYNPADPTRAAAQETLARVLEGTLRLLHPFMPYITEAIWQKLPLRSPQVETAPEIARAAGRDALPPSISVTAYPTPVEGWADAEANERMALIIDTIRALRSIRAEFRLGEHTRIDAVVMATSDQALAILNEGRAFIENLGKTGQLTIQPVAEAKPKNAAAAVVTGAEIYVPLGGLIDLPKEIERLTKELTTTGDELAKLEKKLSNEGFLTKAKPEVVEKTREEAAALAEKRQALENRLAMLRSMQG</sequence>
<reference key="1">
    <citation type="journal article" date="2004" name="Nucleic Acids Res.">
        <title>Genome sequence of Symbiobacterium thermophilum, an uncultivable bacterium that depends on microbial commensalism.</title>
        <authorList>
            <person name="Ueda K."/>
            <person name="Yamashita A."/>
            <person name="Ishikawa J."/>
            <person name="Shimada M."/>
            <person name="Watsuji T."/>
            <person name="Morimura K."/>
            <person name="Ikeda H."/>
            <person name="Hattori M."/>
            <person name="Beppu T."/>
        </authorList>
    </citation>
    <scope>NUCLEOTIDE SEQUENCE [LARGE SCALE GENOMIC DNA]</scope>
    <source>
        <strain>DSM 24528 / JCM 14929 / IAM 14863 / T</strain>
    </source>
</reference>
<evidence type="ECO:0000255" key="1">
    <source>
        <dbReference type="HAMAP-Rule" id="MF_02004"/>
    </source>
</evidence>
<comment type="function">
    <text evidence="1">Catalyzes the attachment of valine to tRNA(Val). As ValRS can inadvertently accommodate and process structurally similar amino acids such as threonine, to avoid such errors, it has a 'posttransfer' editing activity that hydrolyzes mischarged Thr-tRNA(Val) in a tRNA-dependent manner.</text>
</comment>
<comment type="catalytic activity">
    <reaction evidence="1">
        <text>tRNA(Val) + L-valine + ATP = L-valyl-tRNA(Val) + AMP + diphosphate</text>
        <dbReference type="Rhea" id="RHEA:10704"/>
        <dbReference type="Rhea" id="RHEA-COMP:9672"/>
        <dbReference type="Rhea" id="RHEA-COMP:9708"/>
        <dbReference type="ChEBI" id="CHEBI:30616"/>
        <dbReference type="ChEBI" id="CHEBI:33019"/>
        <dbReference type="ChEBI" id="CHEBI:57762"/>
        <dbReference type="ChEBI" id="CHEBI:78442"/>
        <dbReference type="ChEBI" id="CHEBI:78537"/>
        <dbReference type="ChEBI" id="CHEBI:456215"/>
        <dbReference type="EC" id="6.1.1.9"/>
    </reaction>
</comment>
<comment type="subunit">
    <text evidence="1">Monomer.</text>
</comment>
<comment type="subcellular location">
    <subcellularLocation>
        <location evidence="1">Cytoplasm</location>
    </subcellularLocation>
</comment>
<comment type="domain">
    <text evidence="1">ValRS has two distinct active sites: one for aminoacylation and one for editing. The misactivated threonine is translocated from the active site to the editing site.</text>
</comment>
<comment type="domain">
    <text evidence="1">The C-terminal coiled-coil domain is crucial for aminoacylation activity.</text>
</comment>
<comment type="similarity">
    <text evidence="1">Belongs to the class-I aminoacyl-tRNA synthetase family. ValS type 1 subfamily.</text>
</comment>
<organism>
    <name type="scientific">Symbiobacterium thermophilum (strain DSM 24528 / JCM 14929 / IAM 14863 / T)</name>
    <dbReference type="NCBI Taxonomy" id="292459"/>
    <lineage>
        <taxon>Bacteria</taxon>
        <taxon>Bacillati</taxon>
        <taxon>Bacillota</taxon>
        <taxon>Clostridia</taxon>
        <taxon>Eubacteriales</taxon>
        <taxon>Symbiobacteriaceae</taxon>
        <taxon>Symbiobacterium</taxon>
    </lineage>
</organism>
<feature type="chain" id="PRO_0000224584" description="Valine--tRNA ligase">
    <location>
        <begin position="1"/>
        <end position="911"/>
    </location>
</feature>
<feature type="coiled-coil region" evidence="1">
    <location>
        <begin position="845"/>
        <end position="910"/>
    </location>
</feature>
<feature type="short sequence motif" description="'HIGH' region">
    <location>
        <begin position="53"/>
        <end position="63"/>
    </location>
</feature>
<feature type="short sequence motif" description="'KMSKS' region">
    <location>
        <begin position="533"/>
        <end position="537"/>
    </location>
</feature>
<feature type="binding site" evidence="1">
    <location>
        <position position="536"/>
    </location>
    <ligand>
        <name>ATP</name>
        <dbReference type="ChEBI" id="CHEBI:30616"/>
    </ligand>
</feature>